<reference evidence="7" key="1">
    <citation type="journal article" date="2005" name="Genome Biol.">
        <title>Full-length cDNAs from chicken bursal lymphocytes to facilitate gene function analysis.</title>
        <authorList>
            <person name="Caldwell R.B."/>
            <person name="Kierzek A.M."/>
            <person name="Arakawa H."/>
            <person name="Bezzubov Y."/>
            <person name="Zaim J."/>
            <person name="Fiedler P."/>
            <person name="Kutter S."/>
            <person name="Blagodatski A."/>
            <person name="Kostovska D."/>
            <person name="Koter M."/>
            <person name="Plachy J."/>
            <person name="Carninci P."/>
            <person name="Hayashizaki Y."/>
            <person name="Buerstedde J.-M."/>
        </authorList>
    </citation>
    <scope>NUCLEOTIDE SEQUENCE [LARGE SCALE MRNA]</scope>
    <source>
        <strain evidence="7">CB</strain>
        <tissue evidence="7">Bursa of Fabricius</tissue>
    </source>
</reference>
<accession>Q5ZJ17</accession>
<feature type="chain" id="PRO_0000348057" description="Rab GTPase-activating protein 1-like">
    <location>
        <begin position="1"/>
        <end position="816"/>
    </location>
</feature>
<feature type="domain" description="PID" evidence="4">
    <location>
        <begin position="125"/>
        <end position="281"/>
    </location>
</feature>
<feature type="domain" description="Rab-GAP TBC" evidence="5">
    <location>
        <begin position="539"/>
        <end position="725"/>
    </location>
</feature>
<feature type="region of interest" description="Disordered" evidence="6">
    <location>
        <begin position="29"/>
        <end position="125"/>
    </location>
</feature>
<feature type="region of interest" description="Disordered" evidence="6">
    <location>
        <begin position="466"/>
        <end position="502"/>
    </location>
</feature>
<feature type="compositionally biased region" description="Basic and acidic residues" evidence="6">
    <location>
        <begin position="31"/>
        <end position="42"/>
    </location>
</feature>
<feature type="compositionally biased region" description="Basic and acidic residues" evidence="6">
    <location>
        <begin position="53"/>
        <end position="69"/>
    </location>
</feature>
<feature type="compositionally biased region" description="Polar residues" evidence="6">
    <location>
        <begin position="81"/>
        <end position="100"/>
    </location>
</feature>
<feature type="compositionally biased region" description="Low complexity" evidence="6">
    <location>
        <begin position="110"/>
        <end position="121"/>
    </location>
</feature>
<feature type="compositionally biased region" description="Acidic residues" evidence="6">
    <location>
        <begin position="483"/>
        <end position="493"/>
    </location>
</feature>
<feature type="site" description="Arginine finger" evidence="1">
    <location>
        <position position="581"/>
    </location>
</feature>
<feature type="site" description="Glutamine finger" evidence="1">
    <location>
        <position position="622"/>
    </location>
</feature>
<protein>
    <recommendedName>
        <fullName>Rab GTPase-activating protein 1-like</fullName>
    </recommendedName>
</protein>
<evidence type="ECO:0000250" key="1"/>
<evidence type="ECO:0000250" key="2">
    <source>
        <dbReference type="UniProtKB" id="A6H6A9"/>
    </source>
</evidence>
<evidence type="ECO:0000250" key="3">
    <source>
        <dbReference type="UniProtKB" id="Q5R372"/>
    </source>
</evidence>
<evidence type="ECO:0000255" key="4">
    <source>
        <dbReference type="PROSITE-ProRule" id="PRU00148"/>
    </source>
</evidence>
<evidence type="ECO:0000255" key="5">
    <source>
        <dbReference type="PROSITE-ProRule" id="PRU00163"/>
    </source>
</evidence>
<evidence type="ECO:0000256" key="6">
    <source>
        <dbReference type="SAM" id="MobiDB-lite"/>
    </source>
</evidence>
<evidence type="ECO:0000312" key="7">
    <source>
        <dbReference type="EMBL" id="CAG32276.1"/>
    </source>
</evidence>
<dbReference type="EMBL" id="AJ720617">
    <property type="protein sequence ID" value="CAG32276.1"/>
    <property type="molecule type" value="mRNA"/>
</dbReference>
<dbReference type="RefSeq" id="NP_001012941.1">
    <property type="nucleotide sequence ID" value="NM_001012923.1"/>
</dbReference>
<dbReference type="SMR" id="Q5ZJ17"/>
<dbReference type="FunCoup" id="Q5ZJ17">
    <property type="interactions" value="1285"/>
</dbReference>
<dbReference type="STRING" id="9031.ENSGALP00000032966"/>
<dbReference type="PaxDb" id="9031-ENSGALP00000007275"/>
<dbReference type="GeneID" id="424438"/>
<dbReference type="KEGG" id="gga:424438"/>
<dbReference type="CTD" id="9910"/>
<dbReference type="VEuPathDB" id="HostDB:geneid_424438"/>
<dbReference type="eggNOG" id="KOG1102">
    <property type="taxonomic scope" value="Eukaryota"/>
</dbReference>
<dbReference type="InParanoid" id="Q5ZJ17"/>
<dbReference type="OrthoDB" id="295078at2759"/>
<dbReference type="PhylomeDB" id="Q5ZJ17"/>
<dbReference type="PRO" id="PR:Q5ZJ17"/>
<dbReference type="Proteomes" id="UP000000539">
    <property type="component" value="Unassembled WGS sequence"/>
</dbReference>
<dbReference type="GO" id="GO:0005769">
    <property type="term" value="C:early endosome"/>
    <property type="evidence" value="ECO:0007669"/>
    <property type="project" value="UniProtKB-SubCell"/>
</dbReference>
<dbReference type="GO" id="GO:0005794">
    <property type="term" value="C:Golgi apparatus"/>
    <property type="evidence" value="ECO:0007669"/>
    <property type="project" value="UniProtKB-SubCell"/>
</dbReference>
<dbReference type="GO" id="GO:0005096">
    <property type="term" value="F:GTPase activator activity"/>
    <property type="evidence" value="ECO:0000318"/>
    <property type="project" value="GO_Central"/>
</dbReference>
<dbReference type="GO" id="GO:0031267">
    <property type="term" value="F:small GTPase binding"/>
    <property type="evidence" value="ECO:0000318"/>
    <property type="project" value="GO_Central"/>
</dbReference>
<dbReference type="GO" id="GO:0006897">
    <property type="term" value="P:endocytosis"/>
    <property type="evidence" value="ECO:0007669"/>
    <property type="project" value="UniProtKB-KW"/>
</dbReference>
<dbReference type="GO" id="GO:0015031">
    <property type="term" value="P:protein transport"/>
    <property type="evidence" value="ECO:0007669"/>
    <property type="project" value="UniProtKB-KW"/>
</dbReference>
<dbReference type="GO" id="GO:0032880">
    <property type="term" value="P:regulation of protein localization"/>
    <property type="evidence" value="ECO:0000318"/>
    <property type="project" value="GO_Central"/>
</dbReference>
<dbReference type="CDD" id="cd01211">
    <property type="entry name" value="PTB_Rab6GAP"/>
    <property type="match status" value="1"/>
</dbReference>
<dbReference type="FunFam" id="1.10.10.750:FF:000004">
    <property type="entry name" value="Putative rab gtpase-activating protein 1"/>
    <property type="match status" value="1"/>
</dbReference>
<dbReference type="FunFam" id="1.10.472.80:FF:000007">
    <property type="entry name" value="Rab GTPase-activating protein 1 isoform X1"/>
    <property type="match status" value="1"/>
</dbReference>
<dbReference type="FunFam" id="2.30.29.30:FF:000202">
    <property type="entry name" value="rab GTPase-activating protein 1-like isoform X1"/>
    <property type="match status" value="1"/>
</dbReference>
<dbReference type="FunFam" id="1.10.8.270:FF:000001">
    <property type="entry name" value="TBC1 domain family member 1"/>
    <property type="match status" value="1"/>
</dbReference>
<dbReference type="Gene3D" id="2.30.29.30">
    <property type="entry name" value="Pleckstrin-homology domain (PH domain)/Phosphotyrosine-binding domain (PTB)"/>
    <property type="match status" value="1"/>
</dbReference>
<dbReference type="Gene3D" id="1.10.8.270">
    <property type="entry name" value="putative rabgap domain of human tbc1 domain family member 14 like domains"/>
    <property type="match status" value="1"/>
</dbReference>
<dbReference type="Gene3D" id="1.10.10.750">
    <property type="entry name" value="Ypt/Rab-GAP domain of gyp1p, domain 1"/>
    <property type="match status" value="1"/>
</dbReference>
<dbReference type="Gene3D" id="1.10.472.80">
    <property type="entry name" value="Ypt/Rab-GAP domain of gyp1p, domain 3"/>
    <property type="match status" value="1"/>
</dbReference>
<dbReference type="InterPro" id="IPR022164">
    <property type="entry name" value="Kinesin-like"/>
</dbReference>
<dbReference type="InterPro" id="IPR011993">
    <property type="entry name" value="PH-like_dom_sf"/>
</dbReference>
<dbReference type="InterPro" id="IPR006020">
    <property type="entry name" value="PTB/PI_dom"/>
</dbReference>
<dbReference type="InterPro" id="IPR000195">
    <property type="entry name" value="Rab-GAP-TBC_dom"/>
</dbReference>
<dbReference type="InterPro" id="IPR035969">
    <property type="entry name" value="Rab-GAP_TBC_sf"/>
</dbReference>
<dbReference type="InterPro" id="IPR050302">
    <property type="entry name" value="Rab_GAP_TBC_domain"/>
</dbReference>
<dbReference type="PANTHER" id="PTHR47219">
    <property type="entry name" value="RAB GTPASE-ACTIVATING PROTEIN 1-LIKE"/>
    <property type="match status" value="1"/>
</dbReference>
<dbReference type="PANTHER" id="PTHR47219:SF7">
    <property type="entry name" value="RAB GTPASE-ACTIVATING PROTEIN 1-LIKE"/>
    <property type="match status" value="1"/>
</dbReference>
<dbReference type="Pfam" id="PF12473">
    <property type="entry name" value="DUF3694"/>
    <property type="match status" value="1"/>
</dbReference>
<dbReference type="Pfam" id="PF00566">
    <property type="entry name" value="RabGAP-TBC"/>
    <property type="match status" value="1"/>
</dbReference>
<dbReference type="SMART" id="SM00462">
    <property type="entry name" value="PTB"/>
    <property type="match status" value="1"/>
</dbReference>
<dbReference type="SMART" id="SM00164">
    <property type="entry name" value="TBC"/>
    <property type="match status" value="1"/>
</dbReference>
<dbReference type="SUPFAM" id="SSF50729">
    <property type="entry name" value="PH domain-like"/>
    <property type="match status" value="1"/>
</dbReference>
<dbReference type="SUPFAM" id="SSF47923">
    <property type="entry name" value="Ypt/Rab-GAP domain of gyp1p"/>
    <property type="match status" value="2"/>
</dbReference>
<dbReference type="PROSITE" id="PS01179">
    <property type="entry name" value="PID"/>
    <property type="match status" value="1"/>
</dbReference>
<dbReference type="PROSITE" id="PS50086">
    <property type="entry name" value="TBC_RABGAP"/>
    <property type="match status" value="1"/>
</dbReference>
<sequence length="816" mass="92566">MEVRTSFSKARRIPEAVSTLINEEFVVVHQQTEDSSGKDAKPQLKVFSNGDDQLEKAMEEILRDSEKDQNNSTALPEGSSDACSQASGLGSGGQTNQPSLQLVLDPSTTEVSARRSSSPSEPLEEDSVLFNKLTYLGSMKVSAPRNEPEALRAMANMKSSSQAPLSVTLYVPNVPEGSVRIIDQSSNVEIASFPIYKVLFCVRGQNGTSESDCFAFTESSCGTEEFQIHVFSCEIKEAVSRILYSFSTAFKRSSKQASDHVKDFVLHTPDSDVYTFSVSLEVKEDDGKGNFSPVPKDRDKLYFKLKQGIEKKVVITVQQLSNKELAIERCFGMLLSPGRNVKNSDMHLLDMESMGKSSDGKAYVITGIWNPNAPMFLVLNEETPKDKRVYMTVAVDMVVTEVVEPVRFLLETVVRVYPANERFWYFSRKTFTETFYMKLKQSEGKSHTSAGDPIYEVASLQRESAREEQLLSPTSGGGPVSSQEDEAEEESDNELSSGTGDVSKDCPEKILYSWGELLGRWHNNLVVRPNGLSTLVKRGVPEALRAEVWQLLAGCHDNEAMLDKYRILITMDSAQENVITRDIHRTFPAHDYFKDTEGDGQESLYKICKAYSVYDEDIGYCQGQSFLAAVLLLHMPEEQAFCVFVKIMYDYGLRDLYRNNFEDLHCKFFQLEKLMQEQLPDLYSHFSDLNLEAHMYASQWFLTLFTAKFPLCMVFHIIDLLLCEGMNIIFHVALALLKTSKEDLLQADFEGALKFFRVQLPKRYRAEENARRLMEQACNIKVPTKKLKKYEREYQTMRESQLQQEDPMDRYKFICL</sequence>
<keyword id="KW-0254">Endocytosis</keyword>
<keyword id="KW-0967">Endosome</keyword>
<keyword id="KW-0333">Golgi apparatus</keyword>
<keyword id="KW-0343">GTPase activation</keyword>
<keyword id="KW-0653">Protein transport</keyword>
<keyword id="KW-1185">Reference proteome</keyword>
<keyword id="KW-0813">Transport</keyword>
<comment type="function">
    <text evidence="2 3">GTP-hydrolysis activating protein (GAP) for small GTPase RAB22A, converting active RAB22A-GTP to the inactive form RAB22A-GDP (By similarity). Plays a role in endocytosis and intracellular protein transport. Recruited by ANK2 to phosphatidylinositol 3-phosphate (PI3P)-positive early endosomes, where it inactivates RAB22A, and promotes polarized trafficking to the leading edge of the migrating cells. Part of the ANK2/RABGAP1L complex which is required for the polarized recycling of fibronectin receptor ITGA5 ITGB1 to the plasma membrane that enables continuous directional cell migration (By similarity).</text>
</comment>
<comment type="subunit">
    <text evidence="3">Interacts with ANK2.</text>
</comment>
<comment type="subcellular location">
    <subcellularLocation>
        <location evidence="3">Early endosome</location>
    </subcellularLocation>
    <subcellularLocation>
        <location evidence="3">Golgi apparatus</location>
    </subcellularLocation>
    <text evidence="2 3">Colocalizes on endosomes partially with EEA1 (By similarity). Colocalizes and cotransports on motile vesicles with ANK2 (By similarity).</text>
</comment>
<comment type="domain">
    <text evidence="1">The arginine and glutamine fingers are critical for the GTPase-activating mechanism, they pull out Rab's 'switch 2' glutamine and insert in Rab's active site.</text>
</comment>
<gene>
    <name evidence="3" type="primary">RABGAP1L</name>
    <name type="ORF">RCJMB04_21k9</name>
</gene>
<organism>
    <name type="scientific">Gallus gallus</name>
    <name type="common">Chicken</name>
    <dbReference type="NCBI Taxonomy" id="9031"/>
    <lineage>
        <taxon>Eukaryota</taxon>
        <taxon>Metazoa</taxon>
        <taxon>Chordata</taxon>
        <taxon>Craniata</taxon>
        <taxon>Vertebrata</taxon>
        <taxon>Euteleostomi</taxon>
        <taxon>Archelosauria</taxon>
        <taxon>Archosauria</taxon>
        <taxon>Dinosauria</taxon>
        <taxon>Saurischia</taxon>
        <taxon>Theropoda</taxon>
        <taxon>Coelurosauria</taxon>
        <taxon>Aves</taxon>
        <taxon>Neognathae</taxon>
        <taxon>Galloanserae</taxon>
        <taxon>Galliformes</taxon>
        <taxon>Phasianidae</taxon>
        <taxon>Phasianinae</taxon>
        <taxon>Gallus</taxon>
    </lineage>
</organism>
<name>RBG1L_CHICK</name>
<proteinExistence type="evidence at transcript level"/>